<dbReference type="EMBL" id="AM410093">
    <property type="protein sequence ID" value="CAL68582.1"/>
    <property type="molecule type" value="Genomic_DNA"/>
</dbReference>
<dbReference type="EMBL" id="JPKY01000044">
    <property type="protein sequence ID" value="KFH44650.1"/>
    <property type="status" value="ALT_SEQ"/>
    <property type="molecule type" value="Genomic_DNA"/>
</dbReference>
<dbReference type="SMR" id="A0A086T5L8"/>
<dbReference type="HOGENOM" id="CLU_022491_2_0_1"/>
<dbReference type="Proteomes" id="UP000029964">
    <property type="component" value="Unassembled WGS sequence"/>
</dbReference>
<dbReference type="GO" id="GO:0005737">
    <property type="term" value="C:cytoplasm"/>
    <property type="evidence" value="ECO:0007669"/>
    <property type="project" value="UniProtKB-SubCell"/>
</dbReference>
<dbReference type="GO" id="GO:0005634">
    <property type="term" value="C:nucleus"/>
    <property type="evidence" value="ECO:0007669"/>
    <property type="project" value="UniProtKB-SubCell"/>
</dbReference>
<dbReference type="GO" id="GO:0030435">
    <property type="term" value="P:sporulation resulting in formation of a cellular spore"/>
    <property type="evidence" value="ECO:0007669"/>
    <property type="project" value="UniProtKB-KW"/>
</dbReference>
<dbReference type="FunFam" id="2.60.40.3960:FF:000001">
    <property type="entry name" value="Sexual development activator VeA"/>
    <property type="match status" value="1"/>
</dbReference>
<dbReference type="Gene3D" id="2.60.40.3960">
    <property type="entry name" value="Velvet domain"/>
    <property type="match status" value="1"/>
</dbReference>
<dbReference type="InterPro" id="IPR021740">
    <property type="entry name" value="Velvet"/>
</dbReference>
<dbReference type="InterPro" id="IPR037525">
    <property type="entry name" value="Velvet_dom"/>
</dbReference>
<dbReference type="InterPro" id="IPR038491">
    <property type="entry name" value="Velvet_dom_sf"/>
</dbReference>
<dbReference type="PANTHER" id="PTHR33572:SF14">
    <property type="entry name" value="DEVELOPMENTAL AND SECONDARY METABOLISM REGULATOR VEA"/>
    <property type="match status" value="1"/>
</dbReference>
<dbReference type="PANTHER" id="PTHR33572">
    <property type="entry name" value="SPORE DEVELOPMENT REGULATOR VOSA"/>
    <property type="match status" value="1"/>
</dbReference>
<dbReference type="Pfam" id="PF11754">
    <property type="entry name" value="Velvet"/>
    <property type="match status" value="2"/>
</dbReference>
<dbReference type="PROSITE" id="PS51821">
    <property type="entry name" value="VELVET"/>
    <property type="match status" value="1"/>
</dbReference>
<feature type="chain" id="PRO_0000435765" description="Developmental and secondary metabolism regulator veA">
    <location>
        <begin position="1"/>
        <end position="514"/>
    </location>
</feature>
<feature type="domain" description="Velvet" evidence="2">
    <location>
        <begin position="26"/>
        <end position="218"/>
    </location>
</feature>
<feature type="region of interest" description="Disordered" evidence="3">
    <location>
        <begin position="219"/>
        <end position="463"/>
    </location>
</feature>
<feature type="region of interest" description="PEST" evidence="1">
    <location>
        <begin position="411"/>
        <end position="448"/>
    </location>
</feature>
<feature type="short sequence motif" description="Nuclear localization signal" evidence="1">
    <location>
        <begin position="40"/>
        <end position="45"/>
    </location>
</feature>
<feature type="compositionally biased region" description="Basic and acidic residues" evidence="3">
    <location>
        <begin position="228"/>
        <end position="243"/>
    </location>
</feature>
<feature type="compositionally biased region" description="Low complexity" evidence="3">
    <location>
        <begin position="256"/>
        <end position="267"/>
    </location>
</feature>
<feature type="compositionally biased region" description="Polar residues" evidence="3">
    <location>
        <begin position="386"/>
        <end position="396"/>
    </location>
</feature>
<feature type="compositionally biased region" description="Low complexity" evidence="3">
    <location>
        <begin position="412"/>
        <end position="423"/>
    </location>
</feature>
<sequence>MATPSLIPTDADRDHPVRIHRVTRTNRHLWYQLTVLQQPERARACGAGTKDSDRRPVDPPPVVELRIKEGNSFEEGKEITFDYNANFFLYASLEQSRRIAPGRMQGQPNPPILTGSPVSGMAYLDRPAAAGYFIFPDLSVRHEGHYRLSFSLFETTKDEKDLDIERASDDRLDTGADWRMEIKTSPFDVFSAKKFPGLMESTPLSKEVADQGCHVRIRRDVRMRKRDAKSNNGRDRREDDMARRRTVTPASEDPHSAAARARSMSNSSEHRVPGPPEPPGHPSAVDPAGRGHLSFGGPQYASPHQYGLQSRLPPPSPGGPYNPATQYIKPEHQSYRYPPSRDMSQTGPSPAPRQDGHDRRQSGPYVPPSPSVYSNDGRSRPESHPSYPSTPVSSHPANLPSDPSLVLPRIKSPSNSVSPSNSSLKITDLLVQPLPSSEPKLEVGSAPCPPPKTPIGSKRKHDQTFVQNDRALRNHQRQLDPHYNPVARPCSPVGEQYKRADGTYMYAKFSVFTM</sequence>
<accession>A0A086T5L8</accession>
<accession>A5AC80</accession>
<organism>
    <name type="scientific">Hapsidospora chrysogenum (strain ATCC 11550 / CBS 779.69 / DSM 880 / IAM 14645 / JCM 23072 / IMI 49137)</name>
    <name type="common">Acremonium chrysogenum</name>
    <dbReference type="NCBI Taxonomy" id="857340"/>
    <lineage>
        <taxon>Eukaryota</taxon>
        <taxon>Fungi</taxon>
        <taxon>Dikarya</taxon>
        <taxon>Ascomycota</taxon>
        <taxon>Pezizomycotina</taxon>
        <taxon>Sordariomycetes</taxon>
        <taxon>Hypocreomycetidae</taxon>
        <taxon>Hypocreales</taxon>
        <taxon>Bionectriaceae</taxon>
        <taxon>Hapsidospora</taxon>
    </lineage>
</organism>
<keyword id="KW-0963">Cytoplasm</keyword>
<keyword id="KW-0539">Nucleus</keyword>
<keyword id="KW-1185">Reference proteome</keyword>
<keyword id="KW-0749">Sporulation</keyword>
<keyword id="KW-0804">Transcription</keyword>
<keyword id="KW-0805">Transcription regulation</keyword>
<evidence type="ECO:0000250" key="1">
    <source>
        <dbReference type="UniProtKB" id="C8VTV4"/>
    </source>
</evidence>
<evidence type="ECO:0000255" key="2">
    <source>
        <dbReference type="PROSITE-ProRule" id="PRU01165"/>
    </source>
</evidence>
<evidence type="ECO:0000256" key="3">
    <source>
        <dbReference type="SAM" id="MobiDB-lite"/>
    </source>
</evidence>
<evidence type="ECO:0000269" key="4">
    <source>
    </source>
</evidence>
<evidence type="ECO:0000303" key="5">
    <source>
    </source>
</evidence>
<evidence type="ECO:0000305" key="6"/>
<gene>
    <name evidence="5" type="primary">veA</name>
    <name type="ORF">ACRE_045050</name>
</gene>
<name>VEA_HAPC1</name>
<proteinExistence type="inferred from homology"/>
<reference key="1">
    <citation type="journal article" date="2007" name="Appl. Environ. Microbiol.">
        <title>A homologue of the Aspergillus velvet gene regulates both cephalosporin C biosynthesis and hyphal fragmentation in Acremonium chrysogenum.</title>
        <authorList>
            <person name="Dreyer J."/>
            <person name="Eichhorn H."/>
            <person name="Friedlin E."/>
            <person name="Kaernsteiner H."/>
            <person name="Kueck U."/>
        </authorList>
    </citation>
    <scope>NUCLEOTIDE SEQUENCE [GENOMIC DNA]</scope>
    <scope>SUBCELLULAR LOCATION</scope>
    <scope>FUNCTION</scope>
    <scope>DISRUPTION PHENOTYPE</scope>
    <source>
        <tissue>Mycelium</tissue>
    </source>
</reference>
<reference key="2">
    <citation type="journal article" date="2014" name="Genome Announc.">
        <title>Genome sequence and annotation of Acremonium chrysogenum, producer of the beta-lactam antibiotic cephalosporin C.</title>
        <authorList>
            <person name="Terfehr D."/>
            <person name="Dahlmann T.A."/>
            <person name="Specht T."/>
            <person name="Zadra I."/>
            <person name="Kuernsteiner H."/>
            <person name="Kueck U."/>
        </authorList>
    </citation>
    <scope>NUCLEOTIDE SEQUENCE [LARGE SCALE GENOMIC DNA]</scope>
    <source>
        <strain>ATCC 11550 / CBS 779.69 / DSM 880 / IAM 14645 / JCM 23072 / IMI 49137</strain>
    </source>
</reference>
<comment type="function">
    <text evidence="1 4">Component of the velvet transcription factor complex that controls sexual/asexual developmental ratio in response to light, promoting sexual development in the darkness while stimulating asexual sporulation under illumination (By similarity). The velvet complex hat acts as a global regulator for secondary metabolite gene expression (PubMed:17400783). Controls the expression of the cephalosporin C gene cluster (PubMed:17400783). Regulates hyphal fragmentation (PubMed:17400783).</text>
</comment>
<comment type="subunit">
    <text evidence="1">Component of the heterotrimeric velvet complex composed of laeA, veA and velB; VeA acting as a bridging protein between laeA and velB (By similarity).</text>
</comment>
<comment type="subcellular location">
    <subcellularLocation>
        <location evidence="4">Nucleus</location>
    </subcellularLocation>
    <subcellularLocation>
        <location evidence="1">Cytoplasm</location>
    </subcellularLocation>
    <text evidence="1">Enriched in the nucleus in the dark (By similarity).</text>
</comment>
<comment type="domain">
    <text evidence="1">The C-terminal PEST domain is a region rich in proline, glutamic acid, serine and threonine residues that is required for the light-dependent regulation of development and secondary metabolism (By similarity).</text>
</comment>
<comment type="disruption phenotype">
    <text evidence="4">Reduces by 80% cephalosporin C production and leads to an altered hyphal morphology (PubMed:17400783).</text>
</comment>
<comment type="similarity">
    <text evidence="6">Belongs to the velvet family. VeA subfamily.</text>
</comment>
<comment type="sequence caution" evidence="6">
    <conflict type="erroneous gene model prediction">
        <sequence resource="EMBL-CDS" id="KFH44650"/>
    </conflict>
</comment>
<protein>
    <recommendedName>
        <fullName evidence="6">Developmental and secondary metabolism regulator veA</fullName>
    </recommendedName>
    <alternativeName>
        <fullName evidence="6">Velvet complex subunit A</fullName>
    </alternativeName>
</protein>